<sequence length="940" mass="99957">MCCAIWSASRAPACSASQLSSSHAVRPSVVPDANPRAAPRYSPDLRIQCTSGTPRPCGSSPLAIVTSRETARATTPSAVPNGASVSNSPCATAASTGAGALDPPVRSSISNSRRGPTSGSVRGRPRCSSSVRSAAASACSRASACIGARCHTVTNEVAPPSSASATRIAPAVTGSGSPSADSCTAPPSSTADARAPRSADSAAVCGQPRRLTLCRCARPSASRASSQAAATPGSSNSGARGSGRSVITSHASRPLIASSPTVQRNQTTVHQQTCEGPTCVQRSVTRLTAMSNPSHAEVPSAYPPPADFAANANATGELYAEAEKDRLAFWEKQAKRLSWQTPFTDVLDWSDAPFAKWFVGGKINVAYNCVDRHVEAGNGDRVAIHWEGEPVGDARSITYAELKDEVCKAANALTDLGLVAGDRVAIYMPMIPEAIVAMLACARLGVMHSVVFAGFSASALRARIEDAEAKLVITSDGQYRRGKAASLKEAVDEAVADQPSVKNVLVVRRTGIDVKWTDGRDLWWDETVEQASTEHIPAAFDSEQPLFLLYTSGTTGKPKGIVHTSGGYLTQSSYTHWNVFDVKPESDVYWCTADIGWVTGHTYIVYGPLSNGVTQVVYEGTPTSPTEHRHFEVIEKYGVTIYYTAPTLIRTFMKLGHQIPASHDLSSLRLLGSVGEPINPEAWRWYREHIGGGKTPIVDTWWQTETGAIMISPLPGVTAAKPGSAMTPLPGISAKIVDDEGNQLVPGADEAEHVTGYLVLDQPWPAMLRGIWGDPQRFKDTYWSRFAEQGWYFAGDGARYDSDGHIWVLGRIDDVMNVSGHRISTAEVESALVGHAGVAEAAVVGASDDTTGQAICAFVILKASAHGGPENMIEELRAEVAREISPIAKPREIHIVPELPKTRSGKIMRRLLRDVAEGRELGDTSTLVDPSVFEAIRASK</sequence>
<comment type="function">
    <text evidence="4">Catalyzes the conversion of acetate into acetyl-CoA (AcCoA), an essential intermediate at the junction of anabolic and catabolic pathways. AcsA undergoes a two-step reaction. In the first half reaction, AcsA combines acetate with ATP to form acetyl-adenylate (AcAMP) intermediate. In the second half reaction, it can then transfer the acetyl group from AcAMP to the sulfhydryl group of CoA, forming the product AcCoA.</text>
</comment>
<comment type="catalytic activity">
    <reaction>
        <text>acetate + ATP + CoA = acetyl-CoA + AMP + diphosphate</text>
        <dbReference type="Rhea" id="RHEA:23176"/>
        <dbReference type="ChEBI" id="CHEBI:30089"/>
        <dbReference type="ChEBI" id="CHEBI:30616"/>
        <dbReference type="ChEBI" id="CHEBI:33019"/>
        <dbReference type="ChEBI" id="CHEBI:57287"/>
        <dbReference type="ChEBI" id="CHEBI:57288"/>
        <dbReference type="ChEBI" id="CHEBI:456215"/>
        <dbReference type="EC" id="6.2.1.1"/>
    </reaction>
</comment>
<comment type="cofactor">
    <cofactor evidence="1">
        <name>Mg(2+)</name>
        <dbReference type="ChEBI" id="CHEBI:18420"/>
    </cofactor>
</comment>
<comment type="PTM">
    <text evidence="1">Acetylated on Lys-906 by Pat in the presence of acetyl-CoA as an acetyl donor and ATP. Acetylation results in the inactivation of the enzyme. Deacetylation by the SIR2-homolog deacetylase CobB is required to activate the enzyme (By similarity).</text>
</comment>
<comment type="similarity">
    <text evidence="5">Belongs to the ATP-dependent AMP-binding enzyme family.</text>
</comment>
<comment type="sequence caution" evidence="5">
    <conflict type="erroneous initiation">
        <sequence resource="EMBL-CDS" id="AFP42452"/>
    </conflict>
    <text>Truncated N-terminus.</text>
</comment>
<accession>A0R5G1</accession>
<accession>I7GA85</accession>
<keyword id="KW-0007">Acetylation</keyword>
<keyword id="KW-0067">ATP-binding</keyword>
<keyword id="KW-0436">Ligase</keyword>
<keyword id="KW-0460">Magnesium</keyword>
<keyword id="KW-0479">Metal-binding</keyword>
<keyword id="KW-0547">Nucleotide-binding</keyword>
<keyword id="KW-1185">Reference proteome</keyword>
<keyword id="KW-0732">Signal</keyword>
<reference key="1">
    <citation type="submission" date="2006-10" db="EMBL/GenBank/DDBJ databases">
        <authorList>
            <person name="Fleischmann R.D."/>
            <person name="Dodson R.J."/>
            <person name="Haft D.H."/>
            <person name="Merkel J.S."/>
            <person name="Nelson W.C."/>
            <person name="Fraser C.M."/>
        </authorList>
    </citation>
    <scope>NUCLEOTIDE SEQUENCE [LARGE SCALE GENOMIC DNA]</scope>
    <source>
        <strain>ATCC 700084 / mc(2)155</strain>
    </source>
</reference>
<reference key="2">
    <citation type="journal article" date="2007" name="Genome Biol.">
        <title>Interrupted coding sequences in Mycobacterium smegmatis: authentic mutations or sequencing errors?</title>
        <authorList>
            <person name="Deshayes C."/>
            <person name="Perrodou E."/>
            <person name="Gallien S."/>
            <person name="Euphrasie D."/>
            <person name="Schaeffer C."/>
            <person name="Van-Dorsselaer A."/>
            <person name="Poch O."/>
            <person name="Lecompte O."/>
            <person name="Reyrat J.-M."/>
        </authorList>
    </citation>
    <scope>NUCLEOTIDE SEQUENCE [LARGE SCALE GENOMIC DNA]</scope>
    <source>
        <strain>ATCC 700084 / mc(2)155</strain>
    </source>
</reference>
<reference key="3">
    <citation type="journal article" date="2009" name="Genome Res.">
        <title>Ortho-proteogenomics: multiple proteomes investigation through orthology and a new MS-based protocol.</title>
        <authorList>
            <person name="Gallien S."/>
            <person name="Perrodou E."/>
            <person name="Carapito C."/>
            <person name="Deshayes C."/>
            <person name="Reyrat J.-M."/>
            <person name="Van Dorsselaer A."/>
            <person name="Poch O."/>
            <person name="Schaeffer C."/>
            <person name="Lecompte O."/>
        </authorList>
    </citation>
    <scope>NUCLEOTIDE SEQUENCE [LARGE SCALE GENOMIC DNA]</scope>
    <source>
        <strain>ATCC 700084 / mc(2)155</strain>
    </source>
</reference>
<reference key="4">
    <citation type="journal article" date="2011" name="Biochemistry">
        <title>Reversible acetylation and inactivation of Mycobacterium tuberculosis acetyl-CoA synthetase is dependent on cAMP.</title>
        <authorList>
            <person name="Xu H."/>
            <person name="Hegde S.S."/>
            <person name="Blanchard J.S."/>
        </authorList>
    </citation>
    <scope>FUNCTION</scope>
</reference>
<protein>
    <recommendedName>
        <fullName>Acetyl-coenzyme A synthetase</fullName>
        <shortName>AcCoA synthetase</shortName>
        <shortName>Acs</shortName>
        <ecNumber>6.2.1.1</ecNumber>
    </recommendedName>
    <alternativeName>
        <fullName>Acetate--CoA ligase</fullName>
    </alternativeName>
    <alternativeName>
        <fullName>Acyl-activating enzyme</fullName>
    </alternativeName>
</protein>
<organism>
    <name type="scientific">Mycolicibacterium smegmatis (strain ATCC 700084 / mc(2)155)</name>
    <name type="common">Mycobacterium smegmatis</name>
    <dbReference type="NCBI Taxonomy" id="246196"/>
    <lineage>
        <taxon>Bacteria</taxon>
        <taxon>Bacillati</taxon>
        <taxon>Actinomycetota</taxon>
        <taxon>Actinomycetes</taxon>
        <taxon>Mycobacteriales</taxon>
        <taxon>Mycobacteriaceae</taxon>
        <taxon>Mycolicibacterium</taxon>
    </lineage>
</organism>
<dbReference type="EC" id="6.2.1.1"/>
<dbReference type="EMBL" id="CP000480">
    <property type="protein sequence ID" value="ABK69538.1"/>
    <property type="molecule type" value="Genomic_DNA"/>
</dbReference>
<dbReference type="EMBL" id="CP001663">
    <property type="protein sequence ID" value="AFP42452.1"/>
    <property type="status" value="ALT_INIT"/>
    <property type="molecule type" value="Genomic_DNA"/>
</dbReference>
<dbReference type="RefSeq" id="YP_890399.1">
    <property type="nucleotide sequence ID" value="NC_008596.1"/>
</dbReference>
<dbReference type="SMR" id="A0R5G1"/>
<dbReference type="STRING" id="246196.MSMEG_6179"/>
<dbReference type="PaxDb" id="246196-MSMEI_6020"/>
<dbReference type="KEGG" id="msg:MSMEI_6020"/>
<dbReference type="KEGG" id="msm:MSMEG_6179"/>
<dbReference type="PATRIC" id="fig|246196.19.peg.6019"/>
<dbReference type="eggNOG" id="COG0365">
    <property type="taxonomic scope" value="Bacteria"/>
</dbReference>
<dbReference type="OrthoDB" id="9803968at2"/>
<dbReference type="Proteomes" id="UP000000757">
    <property type="component" value="Chromosome"/>
</dbReference>
<dbReference type="Proteomes" id="UP000006158">
    <property type="component" value="Chromosome"/>
</dbReference>
<dbReference type="GO" id="GO:0005829">
    <property type="term" value="C:cytosol"/>
    <property type="evidence" value="ECO:0007669"/>
    <property type="project" value="TreeGrafter"/>
</dbReference>
<dbReference type="GO" id="GO:0003987">
    <property type="term" value="F:acetate-CoA ligase activity"/>
    <property type="evidence" value="ECO:0007669"/>
    <property type="project" value="UniProtKB-UniRule"/>
</dbReference>
<dbReference type="GO" id="GO:0016208">
    <property type="term" value="F:AMP binding"/>
    <property type="evidence" value="ECO:0007669"/>
    <property type="project" value="InterPro"/>
</dbReference>
<dbReference type="GO" id="GO:0005524">
    <property type="term" value="F:ATP binding"/>
    <property type="evidence" value="ECO:0007669"/>
    <property type="project" value="UniProtKB-KW"/>
</dbReference>
<dbReference type="GO" id="GO:0046872">
    <property type="term" value="F:metal ion binding"/>
    <property type="evidence" value="ECO:0007669"/>
    <property type="project" value="UniProtKB-KW"/>
</dbReference>
<dbReference type="GO" id="GO:0019427">
    <property type="term" value="P:acetyl-CoA biosynthetic process from acetate"/>
    <property type="evidence" value="ECO:0007669"/>
    <property type="project" value="InterPro"/>
</dbReference>
<dbReference type="CDD" id="cd05966">
    <property type="entry name" value="ACS"/>
    <property type="match status" value="1"/>
</dbReference>
<dbReference type="FunFam" id="3.40.50.12780:FF:000001">
    <property type="entry name" value="Acetyl-coenzyme A synthetase"/>
    <property type="match status" value="1"/>
</dbReference>
<dbReference type="Gene3D" id="3.30.300.30">
    <property type="match status" value="1"/>
</dbReference>
<dbReference type="Gene3D" id="3.40.50.12780">
    <property type="entry name" value="N-terminal domain of ligase-like"/>
    <property type="match status" value="1"/>
</dbReference>
<dbReference type="HAMAP" id="MF_01123">
    <property type="entry name" value="Ac_CoA_synth"/>
    <property type="match status" value="1"/>
</dbReference>
<dbReference type="InterPro" id="IPR011904">
    <property type="entry name" value="Ac_CoA_lig"/>
</dbReference>
<dbReference type="InterPro" id="IPR032387">
    <property type="entry name" value="ACAS_N"/>
</dbReference>
<dbReference type="InterPro" id="IPR025110">
    <property type="entry name" value="AMP-bd_C"/>
</dbReference>
<dbReference type="InterPro" id="IPR045851">
    <property type="entry name" value="AMP-bd_C_sf"/>
</dbReference>
<dbReference type="InterPro" id="IPR020845">
    <property type="entry name" value="AMP-binding_CS"/>
</dbReference>
<dbReference type="InterPro" id="IPR000873">
    <property type="entry name" value="AMP-dep_synth/lig_dom"/>
</dbReference>
<dbReference type="InterPro" id="IPR042099">
    <property type="entry name" value="ANL_N_sf"/>
</dbReference>
<dbReference type="NCBIfam" id="TIGR02188">
    <property type="entry name" value="Ac_CoA_lig_AcsA"/>
    <property type="match status" value="1"/>
</dbReference>
<dbReference type="NCBIfam" id="NF001208">
    <property type="entry name" value="PRK00174.1"/>
    <property type="match status" value="1"/>
</dbReference>
<dbReference type="PANTHER" id="PTHR24095">
    <property type="entry name" value="ACETYL-COENZYME A SYNTHETASE"/>
    <property type="match status" value="1"/>
</dbReference>
<dbReference type="PANTHER" id="PTHR24095:SF14">
    <property type="entry name" value="ACETYL-COENZYME A SYNTHETASE 1"/>
    <property type="match status" value="1"/>
</dbReference>
<dbReference type="Pfam" id="PF16177">
    <property type="entry name" value="ACAS_N"/>
    <property type="match status" value="1"/>
</dbReference>
<dbReference type="Pfam" id="PF00501">
    <property type="entry name" value="AMP-binding"/>
    <property type="match status" value="1"/>
</dbReference>
<dbReference type="Pfam" id="PF13193">
    <property type="entry name" value="AMP-binding_C"/>
    <property type="match status" value="1"/>
</dbReference>
<dbReference type="SUPFAM" id="SSF56801">
    <property type="entry name" value="Acetyl-CoA synthetase-like"/>
    <property type="match status" value="1"/>
</dbReference>
<dbReference type="PROSITE" id="PS00455">
    <property type="entry name" value="AMP_BINDING"/>
    <property type="match status" value="1"/>
</dbReference>
<proteinExistence type="inferred from homology"/>
<feature type="signal peptide" evidence="2">
    <location>
        <begin position="1"/>
        <end position="33"/>
    </location>
</feature>
<feature type="chain" id="PRO_0000420242" description="Acetyl-coenzyme A synthetase">
    <location>
        <begin position="34"/>
        <end position="940"/>
    </location>
</feature>
<feature type="region of interest" description="Unknown">
    <location>
        <begin position="1"/>
        <end position="289"/>
    </location>
</feature>
<feature type="region of interest" description="Disordered" evidence="3">
    <location>
        <begin position="70"/>
        <end position="127"/>
    </location>
</feature>
<feature type="region of interest" description="Disordered" evidence="3">
    <location>
        <begin position="157"/>
        <end position="202"/>
    </location>
</feature>
<feature type="region of interest" description="Disordered" evidence="3">
    <location>
        <begin position="224"/>
        <end position="274"/>
    </location>
</feature>
<feature type="region of interest" description="Acetyl-coenzyme A synthetase">
    <location>
        <begin position="290"/>
        <end position="940"/>
    </location>
</feature>
<feature type="compositionally biased region" description="Polar residues" evidence="3">
    <location>
        <begin position="72"/>
        <end position="95"/>
    </location>
</feature>
<feature type="compositionally biased region" description="Polar residues" evidence="3">
    <location>
        <begin position="107"/>
        <end position="120"/>
    </location>
</feature>
<feature type="compositionally biased region" description="Low complexity" evidence="3">
    <location>
        <begin position="184"/>
        <end position="202"/>
    </location>
</feature>
<feature type="compositionally biased region" description="Low complexity" evidence="3">
    <location>
        <begin position="224"/>
        <end position="245"/>
    </location>
</feature>
<feature type="compositionally biased region" description="Polar residues" evidence="3">
    <location>
        <begin position="258"/>
        <end position="274"/>
    </location>
</feature>
<feature type="binding site" evidence="1">
    <location>
        <begin position="480"/>
        <end position="483"/>
    </location>
    <ligand>
        <name>CoA</name>
        <dbReference type="ChEBI" id="CHEBI:57287"/>
    </ligand>
</feature>
<feature type="binding site" evidence="1">
    <location>
        <position position="599"/>
    </location>
    <ligand>
        <name>CoA</name>
        <dbReference type="ChEBI" id="CHEBI:57287"/>
    </ligand>
</feature>
<feature type="binding site" evidence="1">
    <location>
        <begin position="675"/>
        <end position="677"/>
    </location>
    <ligand>
        <name>ATP</name>
        <dbReference type="ChEBI" id="CHEBI:30616"/>
    </ligand>
</feature>
<feature type="binding site" evidence="1">
    <location>
        <begin position="699"/>
        <end position="704"/>
    </location>
    <ligand>
        <name>ATP</name>
        <dbReference type="ChEBI" id="CHEBI:30616"/>
    </ligand>
</feature>
<feature type="binding site" evidence="1">
    <location>
        <position position="796"/>
    </location>
    <ligand>
        <name>ATP</name>
        <dbReference type="ChEBI" id="CHEBI:30616"/>
    </ligand>
</feature>
<feature type="binding site" evidence="1">
    <location>
        <position position="811"/>
    </location>
    <ligand>
        <name>ATP</name>
        <dbReference type="ChEBI" id="CHEBI:30616"/>
    </ligand>
</feature>
<feature type="binding site" evidence="1">
    <location>
        <position position="819"/>
    </location>
    <ligand>
        <name>CoA</name>
        <dbReference type="ChEBI" id="CHEBI:57287"/>
    </ligand>
</feature>
<feature type="binding site" evidence="1">
    <location>
        <position position="822"/>
    </location>
    <ligand>
        <name>ATP</name>
        <dbReference type="ChEBI" id="CHEBI:30616"/>
    </ligand>
</feature>
<feature type="binding site" evidence="1">
    <location>
        <position position="833"/>
    </location>
    <ligand>
        <name>Mg(2+)</name>
        <dbReference type="ChEBI" id="CHEBI:18420"/>
    </ligand>
</feature>
<feature type="binding site" evidence="1">
    <location>
        <position position="835"/>
    </location>
    <ligand>
        <name>Mg(2+)</name>
        <dbReference type="ChEBI" id="CHEBI:18420"/>
    </ligand>
</feature>
<feature type="binding site" evidence="1">
    <location>
        <position position="838"/>
    </location>
    <ligand>
        <name>Mg(2+)</name>
        <dbReference type="ChEBI" id="CHEBI:18420"/>
    </ligand>
</feature>
<feature type="modified residue" description="N6-acetyllysine" evidence="1">
    <location>
        <position position="906"/>
    </location>
</feature>
<gene>
    <name type="primary">acsA</name>
    <name type="ordered locus">MSMEG_6179</name>
    <name type="ordered locus">MSMEI_6020</name>
</gene>
<evidence type="ECO:0000250" key="1"/>
<evidence type="ECO:0000255" key="2"/>
<evidence type="ECO:0000256" key="3">
    <source>
        <dbReference type="SAM" id="MobiDB-lite"/>
    </source>
</evidence>
<evidence type="ECO:0000269" key="4">
    <source>
    </source>
</evidence>
<evidence type="ECO:0000305" key="5"/>
<name>ACSA_MYCS2</name>